<protein>
    <recommendedName>
        <fullName evidence="1">Holliday junction branch migration complex subunit RuvA</fullName>
    </recommendedName>
</protein>
<organism>
    <name type="scientific">Chloroflexus aurantiacus (strain ATCC 29364 / DSM 637 / Y-400-fl)</name>
    <dbReference type="NCBI Taxonomy" id="480224"/>
    <lineage>
        <taxon>Bacteria</taxon>
        <taxon>Bacillati</taxon>
        <taxon>Chloroflexota</taxon>
        <taxon>Chloroflexia</taxon>
        <taxon>Chloroflexales</taxon>
        <taxon>Chloroflexineae</taxon>
        <taxon>Chloroflexaceae</taxon>
        <taxon>Chloroflexus</taxon>
    </lineage>
</organism>
<dbReference type="EMBL" id="CP001364">
    <property type="protein sequence ID" value="ACM52958.1"/>
    <property type="molecule type" value="Genomic_DNA"/>
</dbReference>
<dbReference type="SMR" id="B9LCT8"/>
<dbReference type="KEGG" id="chl:Chy400_1540"/>
<dbReference type="HOGENOM" id="CLU_087936_3_0_0"/>
<dbReference type="OrthoDB" id="5293449at2"/>
<dbReference type="GO" id="GO:0005737">
    <property type="term" value="C:cytoplasm"/>
    <property type="evidence" value="ECO:0007669"/>
    <property type="project" value="UniProtKB-SubCell"/>
</dbReference>
<dbReference type="GO" id="GO:0009379">
    <property type="term" value="C:Holliday junction helicase complex"/>
    <property type="evidence" value="ECO:0007669"/>
    <property type="project" value="InterPro"/>
</dbReference>
<dbReference type="GO" id="GO:0048476">
    <property type="term" value="C:Holliday junction resolvase complex"/>
    <property type="evidence" value="ECO:0007669"/>
    <property type="project" value="UniProtKB-UniRule"/>
</dbReference>
<dbReference type="GO" id="GO:0005524">
    <property type="term" value="F:ATP binding"/>
    <property type="evidence" value="ECO:0007669"/>
    <property type="project" value="InterPro"/>
</dbReference>
<dbReference type="GO" id="GO:0000400">
    <property type="term" value="F:four-way junction DNA binding"/>
    <property type="evidence" value="ECO:0007669"/>
    <property type="project" value="UniProtKB-UniRule"/>
</dbReference>
<dbReference type="GO" id="GO:0009378">
    <property type="term" value="F:four-way junction helicase activity"/>
    <property type="evidence" value="ECO:0007669"/>
    <property type="project" value="InterPro"/>
</dbReference>
<dbReference type="GO" id="GO:0006310">
    <property type="term" value="P:DNA recombination"/>
    <property type="evidence" value="ECO:0007669"/>
    <property type="project" value="UniProtKB-UniRule"/>
</dbReference>
<dbReference type="GO" id="GO:0006281">
    <property type="term" value="P:DNA repair"/>
    <property type="evidence" value="ECO:0007669"/>
    <property type="project" value="UniProtKB-UniRule"/>
</dbReference>
<dbReference type="Gene3D" id="1.10.150.20">
    <property type="entry name" value="5' to 3' exonuclease, C-terminal subdomain"/>
    <property type="match status" value="1"/>
</dbReference>
<dbReference type="Gene3D" id="1.10.8.10">
    <property type="entry name" value="DNA helicase RuvA subunit, C-terminal domain"/>
    <property type="match status" value="1"/>
</dbReference>
<dbReference type="Gene3D" id="2.40.50.140">
    <property type="entry name" value="Nucleic acid-binding proteins"/>
    <property type="match status" value="1"/>
</dbReference>
<dbReference type="HAMAP" id="MF_00031">
    <property type="entry name" value="DNA_HJ_migration_RuvA"/>
    <property type="match status" value="1"/>
</dbReference>
<dbReference type="InterPro" id="IPR013849">
    <property type="entry name" value="DNA_helicase_Holl-junc_RuvA_I"/>
</dbReference>
<dbReference type="InterPro" id="IPR003583">
    <property type="entry name" value="Hlx-hairpin-Hlx_DNA-bd_motif"/>
</dbReference>
<dbReference type="InterPro" id="IPR012340">
    <property type="entry name" value="NA-bd_OB-fold"/>
</dbReference>
<dbReference type="InterPro" id="IPR000085">
    <property type="entry name" value="RuvA"/>
</dbReference>
<dbReference type="InterPro" id="IPR010994">
    <property type="entry name" value="RuvA_2-like"/>
</dbReference>
<dbReference type="InterPro" id="IPR011114">
    <property type="entry name" value="RuvA_C"/>
</dbReference>
<dbReference type="InterPro" id="IPR036267">
    <property type="entry name" value="RuvA_C_sf"/>
</dbReference>
<dbReference type="NCBIfam" id="TIGR00084">
    <property type="entry name" value="ruvA"/>
    <property type="match status" value="1"/>
</dbReference>
<dbReference type="Pfam" id="PF14520">
    <property type="entry name" value="HHH_5"/>
    <property type="match status" value="1"/>
</dbReference>
<dbReference type="Pfam" id="PF07499">
    <property type="entry name" value="RuvA_C"/>
    <property type="match status" value="1"/>
</dbReference>
<dbReference type="Pfam" id="PF01330">
    <property type="entry name" value="RuvA_N"/>
    <property type="match status" value="1"/>
</dbReference>
<dbReference type="SMART" id="SM00278">
    <property type="entry name" value="HhH1"/>
    <property type="match status" value="2"/>
</dbReference>
<dbReference type="SUPFAM" id="SSF46929">
    <property type="entry name" value="DNA helicase RuvA subunit, C-terminal domain"/>
    <property type="match status" value="1"/>
</dbReference>
<dbReference type="SUPFAM" id="SSF50249">
    <property type="entry name" value="Nucleic acid-binding proteins"/>
    <property type="match status" value="1"/>
</dbReference>
<dbReference type="SUPFAM" id="SSF47781">
    <property type="entry name" value="RuvA domain 2-like"/>
    <property type="match status" value="1"/>
</dbReference>
<comment type="function">
    <text evidence="1">The RuvA-RuvB-RuvC complex processes Holliday junction (HJ) DNA during genetic recombination and DNA repair, while the RuvA-RuvB complex plays an important role in the rescue of blocked DNA replication forks via replication fork reversal (RFR). RuvA specifically binds to HJ cruciform DNA, conferring on it an open structure. The RuvB hexamer acts as an ATP-dependent pump, pulling dsDNA into and through the RuvAB complex. HJ branch migration allows RuvC to scan DNA until it finds its consensus sequence, where it cleaves and resolves the cruciform DNA.</text>
</comment>
<comment type="subunit">
    <text evidence="1">Homotetramer. Forms an RuvA(8)-RuvB(12)-Holliday junction (HJ) complex. HJ DNA is sandwiched between 2 RuvA tetramers; dsDNA enters through RuvA and exits via RuvB. An RuvB hexamer assembles on each DNA strand where it exits the tetramer. Each RuvB hexamer is contacted by two RuvA subunits (via domain III) on 2 adjacent RuvB subunits; this complex drives branch migration. In the full resolvosome a probable DNA-RuvA(4)-RuvB(12)-RuvC(2) complex forms which resolves the HJ.</text>
</comment>
<comment type="subcellular location">
    <subcellularLocation>
        <location evidence="1">Cytoplasm</location>
    </subcellularLocation>
</comment>
<comment type="domain">
    <text evidence="1">Has three domains with a flexible linker between the domains II and III and assumes an 'L' shape. Domain III is highly mobile and contacts RuvB.</text>
</comment>
<comment type="similarity">
    <text evidence="1">Belongs to the RuvA family.</text>
</comment>
<keyword id="KW-0963">Cytoplasm</keyword>
<keyword id="KW-0227">DNA damage</keyword>
<keyword id="KW-0233">DNA recombination</keyword>
<keyword id="KW-0234">DNA repair</keyword>
<keyword id="KW-0238">DNA-binding</keyword>
<proteinExistence type="inferred from homology"/>
<accession>B9LCT8</accession>
<sequence length="195" mass="20551">MIASIRGIIQSIGIDHLIVETGGVGLLIYAPRSTLNAVGQIGSETFLYTLLIVREDALTLYGFSDPAQRNLFEQLIGVSGVGPKIALNLLSSGSPDEIQKSIAGGDIARLARVPGIGKKTAERIVLELRGKIDLRQLSGTTPGNVSTLDRELTDILISLGYSATEAAAAIAALPGDAPPTLEERLRLALRYFGSA</sequence>
<reference key="1">
    <citation type="submission" date="2009-01" db="EMBL/GenBank/DDBJ databases">
        <title>Complete sequence of Chloroflexus sp. Y-400-fl.</title>
        <authorList>
            <consortium name="US DOE Joint Genome Institute"/>
            <person name="Lucas S."/>
            <person name="Copeland A."/>
            <person name="Lapidus A."/>
            <person name="Glavina del Rio T."/>
            <person name="Dalin E."/>
            <person name="Tice H."/>
            <person name="Bruce D."/>
            <person name="Goodwin L."/>
            <person name="Pitluck S."/>
            <person name="Sims D."/>
            <person name="Kiss H."/>
            <person name="Brettin T."/>
            <person name="Detter J.C."/>
            <person name="Han C."/>
            <person name="Larimer F."/>
            <person name="Land M."/>
            <person name="Hauser L."/>
            <person name="Kyrpides N."/>
            <person name="Ovchinnikova G."/>
            <person name="Bryant D.A."/>
            <person name="Richardson P."/>
        </authorList>
    </citation>
    <scope>NUCLEOTIDE SEQUENCE [LARGE SCALE GENOMIC DNA]</scope>
    <source>
        <strain>ATCC 29364 / DSM 637 / Y-400-fl</strain>
    </source>
</reference>
<name>RUVA_CHLSY</name>
<gene>
    <name evidence="1" type="primary">ruvA</name>
    <name type="ordered locus">Chy400_1540</name>
</gene>
<feature type="chain" id="PRO_1000195128" description="Holliday junction branch migration complex subunit RuvA">
    <location>
        <begin position="1"/>
        <end position="195"/>
    </location>
</feature>
<feature type="region of interest" description="Domain I" evidence="1">
    <location>
        <begin position="1"/>
        <end position="64"/>
    </location>
</feature>
<feature type="region of interest" description="Domain II" evidence="1">
    <location>
        <begin position="65"/>
        <end position="142"/>
    </location>
</feature>
<feature type="region of interest" description="Flexible linker" evidence="1">
    <location>
        <begin position="143"/>
        <end position="151"/>
    </location>
</feature>
<feature type="region of interest" description="Domain III" evidence="1">
    <location>
        <begin position="151"/>
        <end position="195"/>
    </location>
</feature>
<evidence type="ECO:0000255" key="1">
    <source>
        <dbReference type="HAMAP-Rule" id="MF_00031"/>
    </source>
</evidence>